<feature type="signal peptide" evidence="1">
    <location>
        <begin position="1"/>
        <end position="26"/>
    </location>
</feature>
<feature type="chain" id="PRO_0000014527" description="Butyrophilin subfamily 1 member A1">
    <location>
        <begin position="27"/>
        <end position="526"/>
    </location>
</feature>
<feature type="topological domain" description="Extracellular" evidence="2">
    <location>
        <begin position="27"/>
        <end position="242"/>
    </location>
</feature>
<feature type="transmembrane region" description="Helical" evidence="2">
    <location>
        <begin position="243"/>
        <end position="269"/>
    </location>
</feature>
<feature type="topological domain" description="Cytoplasmic" evidence="2">
    <location>
        <begin position="270"/>
        <end position="526"/>
    </location>
</feature>
<feature type="domain" description="Ig-like V-type 1">
    <location>
        <begin position="27"/>
        <end position="138"/>
    </location>
</feature>
<feature type="domain" description="Ig-like V-type 2">
    <location>
        <begin position="148"/>
        <end position="234"/>
    </location>
</feature>
<feature type="domain" description="B30.2/SPRY" evidence="4">
    <location>
        <begin position="285"/>
        <end position="479"/>
    </location>
</feature>
<feature type="region of interest" description="Disordered" evidence="5">
    <location>
        <begin position="495"/>
        <end position="526"/>
    </location>
</feature>
<feature type="compositionally biased region" description="Basic and acidic residues" evidence="5">
    <location>
        <begin position="504"/>
        <end position="513"/>
    </location>
</feature>
<feature type="compositionally biased region" description="Polar residues" evidence="5">
    <location>
        <begin position="517"/>
        <end position="526"/>
    </location>
</feature>
<feature type="glycosylation site" description="N-linked (GlcNAc...) asparagine" evidence="7">
    <location>
        <position position="55"/>
    </location>
</feature>
<feature type="glycosylation site" description="N-linked (GlcNAc...) asparagine" evidence="7">
    <location>
        <position position="215"/>
    </location>
</feature>
<feature type="disulfide bond" evidence="3">
    <location>
        <begin position="50"/>
        <end position="124"/>
    </location>
</feature>
<feature type="disulfide bond" evidence="3">
    <location>
        <begin position="164"/>
        <end position="218"/>
    </location>
</feature>
<feature type="sequence variant" id="VAR_021169" description="In dbSNP:rs3736781." evidence="6 8 9">
    <original>A</original>
    <variation>T</variation>
    <location>
        <position position="213"/>
    </location>
</feature>
<feature type="sequence variant" id="VAR_030770" description="In dbSNP:rs1980600.">
    <original>V</original>
    <variation>A</variation>
    <location>
        <position position="303"/>
    </location>
</feature>
<feature type="sequence variant" id="VAR_026546" description="In dbSNP:rs9393728." evidence="6 8 9">
    <original>D</original>
    <variation>E</variation>
    <location>
        <position position="503"/>
    </location>
</feature>
<feature type="sequence variant" id="VAR_061302" description="In dbSNP:rs35555795.">
    <original>P</original>
    <variation>S</variation>
    <location>
        <position position="521"/>
    </location>
</feature>
<dbReference type="EMBL" id="U39576">
    <property type="protein sequence ID" value="AAC50489.1"/>
    <property type="molecule type" value="mRNA"/>
</dbReference>
<dbReference type="EMBL" id="AL121936">
    <property type="status" value="NOT_ANNOTATED_CDS"/>
    <property type="molecule type" value="Genomic_DNA"/>
</dbReference>
<dbReference type="EMBL" id="CH471087">
    <property type="protein sequence ID" value="EAW55585.1"/>
    <property type="molecule type" value="Genomic_DNA"/>
</dbReference>
<dbReference type="EMBL" id="BC096312">
    <property type="protein sequence ID" value="AAH96312.1"/>
    <property type="molecule type" value="mRNA"/>
</dbReference>
<dbReference type="EMBL" id="BC096313">
    <property type="protein sequence ID" value="AAH96313.1"/>
    <property type="molecule type" value="mRNA"/>
</dbReference>
<dbReference type="CCDS" id="CCDS4614.1"/>
<dbReference type="PIR" id="S70587">
    <property type="entry name" value="S70587"/>
</dbReference>
<dbReference type="RefSeq" id="NP_001723.2">
    <property type="nucleotide sequence ID" value="NM_001732.3"/>
</dbReference>
<dbReference type="SMR" id="Q13410"/>
<dbReference type="BioGRID" id="107161">
    <property type="interactions" value="23"/>
</dbReference>
<dbReference type="FunCoup" id="Q13410">
    <property type="interactions" value="168"/>
</dbReference>
<dbReference type="IntAct" id="Q13410">
    <property type="interactions" value="11"/>
</dbReference>
<dbReference type="STRING" id="9606.ENSP00000244513"/>
<dbReference type="GlyConnect" id="2933">
    <property type="glycosylation" value="33 N-Linked glycans (2 sites)"/>
</dbReference>
<dbReference type="GlyCosmos" id="Q13410">
    <property type="glycosylation" value="2 sites, 43 glycans"/>
</dbReference>
<dbReference type="GlyGen" id="Q13410">
    <property type="glycosylation" value="2 sites, 44 N-linked glycans (2 sites)"/>
</dbReference>
<dbReference type="iPTMnet" id="Q13410"/>
<dbReference type="PhosphoSitePlus" id="Q13410"/>
<dbReference type="BioMuta" id="BTN1A1"/>
<dbReference type="DMDM" id="317373471"/>
<dbReference type="jPOST" id="Q13410"/>
<dbReference type="MassIVE" id="Q13410"/>
<dbReference type="PaxDb" id="9606-ENSP00000244513"/>
<dbReference type="PeptideAtlas" id="Q13410"/>
<dbReference type="ProteomicsDB" id="59393"/>
<dbReference type="Antibodypedia" id="2403">
    <property type="antibodies" value="366 antibodies from 24 providers"/>
</dbReference>
<dbReference type="DNASU" id="696"/>
<dbReference type="Ensembl" id="ENST00000244513.10">
    <property type="protein sequence ID" value="ENSP00000244513.6"/>
    <property type="gene ID" value="ENSG00000124557.14"/>
</dbReference>
<dbReference type="Ensembl" id="ENST00000684113.1">
    <property type="protein sequence ID" value="ENSP00000507193.1"/>
    <property type="gene ID" value="ENSG00000124557.14"/>
</dbReference>
<dbReference type="Ensembl" id="ENST00000709948.1">
    <property type="protein sequence ID" value="ENSP00000517956.1"/>
    <property type="gene ID" value="ENSG00000292177.1"/>
</dbReference>
<dbReference type="Ensembl" id="ENST00000709949.1">
    <property type="protein sequence ID" value="ENSP00000517957.1"/>
    <property type="gene ID" value="ENSG00000292177.1"/>
</dbReference>
<dbReference type="GeneID" id="696"/>
<dbReference type="KEGG" id="hsa:696"/>
<dbReference type="MANE-Select" id="ENST00000684113.1">
    <property type="protein sequence ID" value="ENSP00000507193.1"/>
    <property type="RefSeq nucleotide sequence ID" value="NM_001732.3"/>
    <property type="RefSeq protein sequence ID" value="NP_001723.2"/>
</dbReference>
<dbReference type="UCSC" id="uc003nif.5">
    <property type="organism name" value="human"/>
</dbReference>
<dbReference type="AGR" id="HGNC:1135"/>
<dbReference type="CTD" id="696"/>
<dbReference type="DisGeNET" id="696"/>
<dbReference type="GeneCards" id="BTN1A1"/>
<dbReference type="HGNC" id="HGNC:1135">
    <property type="gene designation" value="BTN1A1"/>
</dbReference>
<dbReference type="HPA" id="ENSG00000124557">
    <property type="expression patterns" value="Tissue enriched (breast)"/>
</dbReference>
<dbReference type="MIM" id="601610">
    <property type="type" value="gene"/>
</dbReference>
<dbReference type="neXtProt" id="NX_Q13410"/>
<dbReference type="OpenTargets" id="ENSG00000124557"/>
<dbReference type="PharmGKB" id="PA25455"/>
<dbReference type="VEuPathDB" id="HostDB:ENSG00000124557"/>
<dbReference type="eggNOG" id="ENOG502QSRZ">
    <property type="taxonomic scope" value="Eukaryota"/>
</dbReference>
<dbReference type="GeneTree" id="ENSGT00940000161530"/>
<dbReference type="HOGENOM" id="CLU_013137_22_2_1"/>
<dbReference type="InParanoid" id="Q13410"/>
<dbReference type="OMA" id="AHMELRW"/>
<dbReference type="OrthoDB" id="6105938at2759"/>
<dbReference type="PAN-GO" id="Q13410">
    <property type="GO annotations" value="4 GO annotations based on evolutionary models"/>
</dbReference>
<dbReference type="PhylomeDB" id="Q13410"/>
<dbReference type="TreeFam" id="TF331083"/>
<dbReference type="PathwayCommons" id="Q13410"/>
<dbReference type="Reactome" id="R-HSA-8851680">
    <property type="pathway name" value="Butyrophilin (BTN) family interactions"/>
</dbReference>
<dbReference type="SignaLink" id="Q13410"/>
<dbReference type="BioGRID-ORCS" id="696">
    <property type="hits" value="16 hits in 1144 CRISPR screens"/>
</dbReference>
<dbReference type="GeneWiki" id="Butyrophilin,_subfamily_1,_member_A1"/>
<dbReference type="GenomeRNAi" id="696"/>
<dbReference type="Pharos" id="Q13410">
    <property type="development level" value="Tbio"/>
</dbReference>
<dbReference type="PRO" id="PR:Q13410"/>
<dbReference type="Proteomes" id="UP000005640">
    <property type="component" value="Chromosome 6"/>
</dbReference>
<dbReference type="RNAct" id="Q13410">
    <property type="molecule type" value="protein"/>
</dbReference>
<dbReference type="Bgee" id="ENSG00000124557">
    <property type="expression patterns" value="Expressed in primordial germ cell in gonad and 23 other cell types or tissues"/>
</dbReference>
<dbReference type="GO" id="GO:0009897">
    <property type="term" value="C:external side of plasma membrane"/>
    <property type="evidence" value="ECO:0000318"/>
    <property type="project" value="GO_Central"/>
</dbReference>
<dbReference type="GO" id="GO:0005615">
    <property type="term" value="C:extracellular space"/>
    <property type="evidence" value="ECO:0007005"/>
    <property type="project" value="UniProtKB"/>
</dbReference>
<dbReference type="GO" id="GO:0005886">
    <property type="term" value="C:plasma membrane"/>
    <property type="evidence" value="ECO:0000304"/>
    <property type="project" value="Reactome"/>
</dbReference>
<dbReference type="GO" id="GO:0038023">
    <property type="term" value="F:signaling receptor activity"/>
    <property type="evidence" value="ECO:0000304"/>
    <property type="project" value="ProtInc"/>
</dbReference>
<dbReference type="GO" id="GO:0005102">
    <property type="term" value="F:signaling receptor binding"/>
    <property type="evidence" value="ECO:0000318"/>
    <property type="project" value="GO_Central"/>
</dbReference>
<dbReference type="GO" id="GO:0001817">
    <property type="term" value="P:regulation of cytokine production"/>
    <property type="evidence" value="ECO:0000318"/>
    <property type="project" value="GO_Central"/>
</dbReference>
<dbReference type="GO" id="GO:0050852">
    <property type="term" value="P:T cell receptor signaling pathway"/>
    <property type="evidence" value="ECO:0000318"/>
    <property type="project" value="GO_Central"/>
</dbReference>
<dbReference type="CDD" id="cd05713">
    <property type="entry name" value="IgV_MOG_like"/>
    <property type="match status" value="1"/>
</dbReference>
<dbReference type="CDD" id="cd15819">
    <property type="entry name" value="SPRY_PRY_BTN1_2"/>
    <property type="match status" value="1"/>
</dbReference>
<dbReference type="FunFam" id="2.60.120.920:FF:000004">
    <property type="entry name" value="Butyrophilin subfamily 1 member A1"/>
    <property type="match status" value="1"/>
</dbReference>
<dbReference type="FunFam" id="2.60.40.10:FF:000088">
    <property type="entry name" value="Butyrophilin subfamily 1 member A1"/>
    <property type="match status" value="1"/>
</dbReference>
<dbReference type="FunFam" id="2.60.40.10:FF:000208">
    <property type="entry name" value="Butyrophilin subfamily 1 member A1"/>
    <property type="match status" value="1"/>
</dbReference>
<dbReference type="Gene3D" id="2.60.120.920">
    <property type="match status" value="1"/>
</dbReference>
<dbReference type="Gene3D" id="2.60.40.10">
    <property type="entry name" value="Immunoglobulins"/>
    <property type="match status" value="2"/>
</dbReference>
<dbReference type="InterPro" id="IPR001870">
    <property type="entry name" value="B30.2/SPRY"/>
</dbReference>
<dbReference type="InterPro" id="IPR043136">
    <property type="entry name" value="B30.2/SPRY_sf"/>
</dbReference>
<dbReference type="InterPro" id="IPR053896">
    <property type="entry name" value="BTN3A2-like_Ig-C"/>
</dbReference>
<dbReference type="InterPro" id="IPR003879">
    <property type="entry name" value="Butyrophylin_SPRY"/>
</dbReference>
<dbReference type="InterPro" id="IPR013320">
    <property type="entry name" value="ConA-like_dom_sf"/>
</dbReference>
<dbReference type="InterPro" id="IPR007110">
    <property type="entry name" value="Ig-like_dom"/>
</dbReference>
<dbReference type="InterPro" id="IPR036179">
    <property type="entry name" value="Ig-like_dom_sf"/>
</dbReference>
<dbReference type="InterPro" id="IPR013783">
    <property type="entry name" value="Ig-like_fold"/>
</dbReference>
<dbReference type="InterPro" id="IPR003599">
    <property type="entry name" value="Ig_sub"/>
</dbReference>
<dbReference type="InterPro" id="IPR013106">
    <property type="entry name" value="Ig_V-set"/>
</dbReference>
<dbReference type="InterPro" id="IPR050504">
    <property type="entry name" value="IgSF_BTN/MOG"/>
</dbReference>
<dbReference type="InterPro" id="IPR006574">
    <property type="entry name" value="PRY"/>
</dbReference>
<dbReference type="InterPro" id="IPR037958">
    <property type="entry name" value="SPRY/PRY_BTN1/2"/>
</dbReference>
<dbReference type="InterPro" id="IPR003877">
    <property type="entry name" value="SPRY_dom"/>
</dbReference>
<dbReference type="PANTHER" id="PTHR24100">
    <property type="entry name" value="BUTYROPHILIN"/>
    <property type="match status" value="1"/>
</dbReference>
<dbReference type="PANTHER" id="PTHR24100:SF138">
    <property type="entry name" value="BUTYROPHILIN SUBFAMILY 1 MEMBER A1"/>
    <property type="match status" value="1"/>
</dbReference>
<dbReference type="Pfam" id="PF22705">
    <property type="entry name" value="C2-set_3"/>
    <property type="match status" value="1"/>
</dbReference>
<dbReference type="Pfam" id="PF13765">
    <property type="entry name" value="PRY"/>
    <property type="match status" value="1"/>
</dbReference>
<dbReference type="Pfam" id="PF00622">
    <property type="entry name" value="SPRY"/>
    <property type="match status" value="1"/>
</dbReference>
<dbReference type="Pfam" id="PF07686">
    <property type="entry name" value="V-set"/>
    <property type="match status" value="1"/>
</dbReference>
<dbReference type="PRINTS" id="PR01407">
    <property type="entry name" value="BUTYPHLNCDUF"/>
</dbReference>
<dbReference type="SMART" id="SM00409">
    <property type="entry name" value="IG"/>
    <property type="match status" value="1"/>
</dbReference>
<dbReference type="SMART" id="SM00406">
    <property type="entry name" value="IGv"/>
    <property type="match status" value="1"/>
</dbReference>
<dbReference type="SMART" id="SM00589">
    <property type="entry name" value="PRY"/>
    <property type="match status" value="1"/>
</dbReference>
<dbReference type="SMART" id="SM00449">
    <property type="entry name" value="SPRY"/>
    <property type="match status" value="1"/>
</dbReference>
<dbReference type="SUPFAM" id="SSF49899">
    <property type="entry name" value="Concanavalin A-like lectins/glucanases"/>
    <property type="match status" value="1"/>
</dbReference>
<dbReference type="SUPFAM" id="SSF48726">
    <property type="entry name" value="Immunoglobulin"/>
    <property type="match status" value="2"/>
</dbReference>
<dbReference type="PROSITE" id="PS50188">
    <property type="entry name" value="B302_SPRY"/>
    <property type="match status" value="1"/>
</dbReference>
<dbReference type="PROSITE" id="PS50835">
    <property type="entry name" value="IG_LIKE"/>
    <property type="match status" value="2"/>
</dbReference>
<name>BT1A1_HUMAN</name>
<evidence type="ECO:0000250" key="1"/>
<evidence type="ECO:0000255" key="2"/>
<evidence type="ECO:0000255" key="3">
    <source>
        <dbReference type="PROSITE-ProRule" id="PRU00114"/>
    </source>
</evidence>
<evidence type="ECO:0000255" key="4">
    <source>
        <dbReference type="PROSITE-ProRule" id="PRU00548"/>
    </source>
</evidence>
<evidence type="ECO:0000256" key="5">
    <source>
        <dbReference type="SAM" id="MobiDB-lite"/>
    </source>
</evidence>
<evidence type="ECO:0000269" key="6">
    <source>
    </source>
</evidence>
<evidence type="ECO:0000269" key="7">
    <source>
    </source>
</evidence>
<evidence type="ECO:0000269" key="8">
    <source>
    </source>
</evidence>
<evidence type="ECO:0000269" key="9">
    <source ref="3"/>
</evidence>
<evidence type="ECO:0000305" key="10"/>
<organism>
    <name type="scientific">Homo sapiens</name>
    <name type="common">Human</name>
    <dbReference type="NCBI Taxonomy" id="9606"/>
    <lineage>
        <taxon>Eukaryota</taxon>
        <taxon>Metazoa</taxon>
        <taxon>Chordata</taxon>
        <taxon>Craniata</taxon>
        <taxon>Vertebrata</taxon>
        <taxon>Euteleostomi</taxon>
        <taxon>Mammalia</taxon>
        <taxon>Eutheria</taxon>
        <taxon>Euarchontoglires</taxon>
        <taxon>Primates</taxon>
        <taxon>Haplorrhini</taxon>
        <taxon>Catarrhini</taxon>
        <taxon>Hominidae</taxon>
        <taxon>Homo</taxon>
    </lineage>
</organism>
<reference key="1">
    <citation type="journal article" date="1996" name="Biochim. Biophys. Acta">
        <title>Cloning and sequence analysis of human butyrophilin reveals a potential receptor function.</title>
        <authorList>
            <person name="Taylor M.R."/>
            <person name="Peterson J.A."/>
            <person name="Ceriani R.L."/>
            <person name="Couto J.R."/>
        </authorList>
    </citation>
    <scope>NUCLEOTIDE SEQUENCE [MRNA]</scope>
    <scope>VARIANTS THR-213 AND GLU-503</scope>
    <source>
        <tissue>Mammary gland</tissue>
    </source>
</reference>
<reference key="2">
    <citation type="journal article" date="2003" name="Nature">
        <title>The DNA sequence and analysis of human chromosome 6.</title>
        <authorList>
            <person name="Mungall A.J."/>
            <person name="Palmer S.A."/>
            <person name="Sims S.K."/>
            <person name="Edwards C.A."/>
            <person name="Ashurst J.L."/>
            <person name="Wilming L."/>
            <person name="Jones M.C."/>
            <person name="Horton R."/>
            <person name="Hunt S.E."/>
            <person name="Scott C.E."/>
            <person name="Gilbert J.G.R."/>
            <person name="Clamp M.E."/>
            <person name="Bethel G."/>
            <person name="Milne S."/>
            <person name="Ainscough R."/>
            <person name="Almeida J.P."/>
            <person name="Ambrose K.D."/>
            <person name="Andrews T.D."/>
            <person name="Ashwell R.I.S."/>
            <person name="Babbage A.K."/>
            <person name="Bagguley C.L."/>
            <person name="Bailey J."/>
            <person name="Banerjee R."/>
            <person name="Barker D.J."/>
            <person name="Barlow K.F."/>
            <person name="Bates K."/>
            <person name="Beare D.M."/>
            <person name="Beasley H."/>
            <person name="Beasley O."/>
            <person name="Bird C.P."/>
            <person name="Blakey S.E."/>
            <person name="Bray-Allen S."/>
            <person name="Brook J."/>
            <person name="Brown A.J."/>
            <person name="Brown J.Y."/>
            <person name="Burford D.C."/>
            <person name="Burrill W."/>
            <person name="Burton J."/>
            <person name="Carder C."/>
            <person name="Carter N.P."/>
            <person name="Chapman J.C."/>
            <person name="Clark S.Y."/>
            <person name="Clark G."/>
            <person name="Clee C.M."/>
            <person name="Clegg S."/>
            <person name="Cobley V."/>
            <person name="Collier R.E."/>
            <person name="Collins J.E."/>
            <person name="Colman L.K."/>
            <person name="Corby N.R."/>
            <person name="Coville G.J."/>
            <person name="Culley K.M."/>
            <person name="Dhami P."/>
            <person name="Davies J."/>
            <person name="Dunn M."/>
            <person name="Earthrowl M.E."/>
            <person name="Ellington A.E."/>
            <person name="Evans K.A."/>
            <person name="Faulkner L."/>
            <person name="Francis M.D."/>
            <person name="Frankish A."/>
            <person name="Frankland J."/>
            <person name="French L."/>
            <person name="Garner P."/>
            <person name="Garnett J."/>
            <person name="Ghori M.J."/>
            <person name="Gilby L.M."/>
            <person name="Gillson C.J."/>
            <person name="Glithero R.J."/>
            <person name="Grafham D.V."/>
            <person name="Grant M."/>
            <person name="Gribble S."/>
            <person name="Griffiths C."/>
            <person name="Griffiths M.N.D."/>
            <person name="Hall R."/>
            <person name="Halls K.S."/>
            <person name="Hammond S."/>
            <person name="Harley J.L."/>
            <person name="Hart E.A."/>
            <person name="Heath P.D."/>
            <person name="Heathcott R."/>
            <person name="Holmes S.J."/>
            <person name="Howden P.J."/>
            <person name="Howe K.L."/>
            <person name="Howell G.R."/>
            <person name="Huckle E."/>
            <person name="Humphray S.J."/>
            <person name="Humphries M.D."/>
            <person name="Hunt A.R."/>
            <person name="Johnson C.M."/>
            <person name="Joy A.A."/>
            <person name="Kay M."/>
            <person name="Keenan S.J."/>
            <person name="Kimberley A.M."/>
            <person name="King A."/>
            <person name="Laird G.K."/>
            <person name="Langford C."/>
            <person name="Lawlor S."/>
            <person name="Leongamornlert D.A."/>
            <person name="Leversha M."/>
            <person name="Lloyd C.R."/>
            <person name="Lloyd D.M."/>
            <person name="Loveland J.E."/>
            <person name="Lovell J."/>
            <person name="Martin S."/>
            <person name="Mashreghi-Mohammadi M."/>
            <person name="Maslen G.L."/>
            <person name="Matthews L."/>
            <person name="McCann O.T."/>
            <person name="McLaren S.J."/>
            <person name="McLay K."/>
            <person name="McMurray A."/>
            <person name="Moore M.J.F."/>
            <person name="Mullikin J.C."/>
            <person name="Niblett D."/>
            <person name="Nickerson T."/>
            <person name="Novik K.L."/>
            <person name="Oliver K."/>
            <person name="Overton-Larty E.K."/>
            <person name="Parker A."/>
            <person name="Patel R."/>
            <person name="Pearce A.V."/>
            <person name="Peck A.I."/>
            <person name="Phillimore B.J.C.T."/>
            <person name="Phillips S."/>
            <person name="Plumb R.W."/>
            <person name="Porter K.M."/>
            <person name="Ramsey Y."/>
            <person name="Ranby S.A."/>
            <person name="Rice C.M."/>
            <person name="Ross M.T."/>
            <person name="Searle S.M."/>
            <person name="Sehra H.K."/>
            <person name="Sheridan E."/>
            <person name="Skuce C.D."/>
            <person name="Smith S."/>
            <person name="Smith M."/>
            <person name="Spraggon L."/>
            <person name="Squares S.L."/>
            <person name="Steward C.A."/>
            <person name="Sycamore N."/>
            <person name="Tamlyn-Hall G."/>
            <person name="Tester J."/>
            <person name="Theaker A.J."/>
            <person name="Thomas D.W."/>
            <person name="Thorpe A."/>
            <person name="Tracey A."/>
            <person name="Tromans A."/>
            <person name="Tubby B."/>
            <person name="Wall M."/>
            <person name="Wallis J.M."/>
            <person name="West A.P."/>
            <person name="White S.S."/>
            <person name="Whitehead S.L."/>
            <person name="Whittaker H."/>
            <person name="Wild A."/>
            <person name="Willey D.J."/>
            <person name="Wilmer T.E."/>
            <person name="Wood J.M."/>
            <person name="Wray P.W."/>
            <person name="Wyatt J.C."/>
            <person name="Young L."/>
            <person name="Younger R.M."/>
            <person name="Bentley D.R."/>
            <person name="Coulson A."/>
            <person name="Durbin R.M."/>
            <person name="Hubbard T."/>
            <person name="Sulston J.E."/>
            <person name="Dunham I."/>
            <person name="Rogers J."/>
            <person name="Beck S."/>
        </authorList>
    </citation>
    <scope>NUCLEOTIDE SEQUENCE [LARGE SCALE GENOMIC DNA]</scope>
</reference>
<reference key="3">
    <citation type="submission" date="2005-07" db="EMBL/GenBank/DDBJ databases">
        <authorList>
            <person name="Mural R.J."/>
            <person name="Istrail S."/>
            <person name="Sutton G.G."/>
            <person name="Florea L."/>
            <person name="Halpern A.L."/>
            <person name="Mobarry C.M."/>
            <person name="Lippert R."/>
            <person name="Walenz B."/>
            <person name="Shatkay H."/>
            <person name="Dew I."/>
            <person name="Miller J.R."/>
            <person name="Flanigan M.J."/>
            <person name="Edwards N.J."/>
            <person name="Bolanos R."/>
            <person name="Fasulo D."/>
            <person name="Halldorsson B.V."/>
            <person name="Hannenhalli S."/>
            <person name="Turner R."/>
            <person name="Yooseph S."/>
            <person name="Lu F."/>
            <person name="Nusskern D.R."/>
            <person name="Shue B.C."/>
            <person name="Zheng X.H."/>
            <person name="Zhong F."/>
            <person name="Delcher A.L."/>
            <person name="Huson D.H."/>
            <person name="Kravitz S.A."/>
            <person name="Mouchard L."/>
            <person name="Reinert K."/>
            <person name="Remington K.A."/>
            <person name="Clark A.G."/>
            <person name="Waterman M.S."/>
            <person name="Eichler E.E."/>
            <person name="Adams M.D."/>
            <person name="Hunkapiller M.W."/>
            <person name="Myers E.W."/>
            <person name="Venter J.C."/>
        </authorList>
    </citation>
    <scope>NUCLEOTIDE SEQUENCE [LARGE SCALE GENOMIC DNA]</scope>
    <scope>VARIANTS THR-213 AND GLU-503</scope>
</reference>
<reference key="4">
    <citation type="journal article" date="2004" name="Genome Res.">
        <title>The status, quality, and expansion of the NIH full-length cDNA project: the Mammalian Gene Collection (MGC).</title>
        <authorList>
            <consortium name="The MGC Project Team"/>
        </authorList>
    </citation>
    <scope>NUCLEOTIDE SEQUENCE [LARGE SCALE MRNA]</scope>
    <scope>VARIANTS THR-213 AND GLU-503</scope>
</reference>
<reference key="5">
    <citation type="journal article" date="2008" name="Proteomics">
        <title>Identification of N-linked glycoproteins in human milk by hydrophilic interaction liquid chromatography and mass spectrometry.</title>
        <authorList>
            <person name="Picariello G."/>
            <person name="Ferranti P."/>
            <person name="Mamone G."/>
            <person name="Roepstorff P."/>
            <person name="Addeo F."/>
        </authorList>
    </citation>
    <scope>GLYCOSYLATION [LARGE SCALE ANALYSIS] AT ASN-55 AND ASN-215</scope>
    <source>
        <tissue>Milk</tissue>
    </source>
</reference>
<sequence length="526" mass="58960">MAVFPSSGLPRCLLTLILLQLPKLDSAPFDVIGPPEPILAVVGEDAELPCRLSPNASAEHLELRWFRKKVSPAVLVHRDGREQEAEQMPEYRGRATLVQDGIAKGRVALRIRGVRVSDDGEYTCFFREDGSYEEALVHLKVAALGSDPHISMQVQENGEICLECTSVGWYPEPQVQWRTSKGEKFPSTSESRNPDEEGLFTVAASVIIRDTSAKNVSCYIQNLLLGQEKKVEISIPASSLPRLTPWIVAVAVILMVLGLLTIGSIFFTWRLYNERPRERRNEFSSKERLLEELKWKKATLHAVDVTLDPDTAHPHLFLYEDSKSVRLEDSRQKLPEKTERFDSWPCVLGRETFTSGRHYWEVEVGDRTDWAIGVCRENVMKKGFDPMTPENGFWAVELYGNGYWALTPLRTPLPLAGPPRRVGIFLDYESGDISFYNMNDGSDIYTFSNVTFSGPLRPFFCLWSSGKKPLTICPIADGPERVTVIANAQDLSKEIPLSPMGEDSAPRDADTLHSKLIPTQPSQGAP</sequence>
<comment type="function">
    <text evidence="1">May function in the secretion of milk-fat droplets. May act as a specific membrane-associated receptor for the association of cytoplasmic droplets with the apical plasma membrane (By similarity). Inhibits the proliferation of CD4 and CD8 T-cells activated by anti-CD3 antibodies, T-cell metabolism and IL2 and IFNG secretion (By similarity).</text>
</comment>
<comment type="subunit">
    <text evidence="1">Seems to associate with xanthine dehydrogenase/oxidase.</text>
</comment>
<comment type="interaction">
    <interactant intactId="EBI-2372803">
        <id>Q13410</id>
    </interactant>
    <interactant intactId="EBI-16439278">
        <id>Q6FHY5</id>
        <label>MEOX2</label>
    </interactant>
    <organismsDiffer>false</organismsDiffer>
    <experiments>3</experiments>
</comment>
<comment type="interaction">
    <interactant intactId="EBI-2372803">
        <id>Q13410</id>
    </interactant>
    <interactant intactId="EBI-2812848">
        <id>Q8NHP6</id>
        <label>MOSPD2</label>
    </interactant>
    <organismsDiffer>false</organismsDiffer>
    <experiments>3</experiments>
</comment>
<comment type="subcellular location">
    <subcellularLocation>
        <location>Membrane</location>
        <topology>Single-pass type I membrane protein</topology>
    </subcellularLocation>
    <subcellularLocation>
        <location>Secreted</location>
    </subcellularLocation>
</comment>
<comment type="PTM">
    <text evidence="1">N-glycosylated.</text>
</comment>
<comment type="similarity">
    <text evidence="10">Belongs to the immunoglobulin superfamily. BTN/MOG family.</text>
</comment>
<proteinExistence type="evidence at protein level"/>
<gene>
    <name type="primary">BTN1A1</name>
    <name type="synonym">BTN</name>
</gene>
<keyword id="KW-1015">Disulfide bond</keyword>
<keyword id="KW-0325">Glycoprotein</keyword>
<keyword id="KW-0393">Immunoglobulin domain</keyword>
<keyword id="KW-0472">Membrane</keyword>
<keyword id="KW-1267">Proteomics identification</keyword>
<keyword id="KW-1185">Reference proteome</keyword>
<keyword id="KW-0677">Repeat</keyword>
<keyword id="KW-0964">Secreted</keyword>
<keyword id="KW-0732">Signal</keyword>
<keyword id="KW-0812">Transmembrane</keyword>
<keyword id="KW-1133">Transmembrane helix</keyword>
<accession>Q13410</accession>
<accession>Q4VAN3</accession>
<accession>Q4VAN4</accession>
<accession>Q9H458</accession>
<protein>
    <recommendedName>
        <fullName>Butyrophilin subfamily 1 member A1</fullName>
        <shortName>BT</shortName>
    </recommendedName>
</protein>